<comment type="similarity">
    <text evidence="2">Belongs to the eukaryotic ribosomal protein eS26 family.</text>
</comment>
<comment type="caution">
    <text evidence="2">Could be the product of a pseudogene.</text>
</comment>
<organism>
    <name type="scientific">Homo sapiens</name>
    <name type="common">Human</name>
    <dbReference type="NCBI Taxonomy" id="9606"/>
    <lineage>
        <taxon>Eukaryota</taxon>
        <taxon>Metazoa</taxon>
        <taxon>Chordata</taxon>
        <taxon>Craniata</taxon>
        <taxon>Vertebrata</taxon>
        <taxon>Euteleostomi</taxon>
        <taxon>Mammalia</taxon>
        <taxon>Eutheria</taxon>
        <taxon>Euarchontoglires</taxon>
        <taxon>Primates</taxon>
        <taxon>Haplorrhini</taxon>
        <taxon>Catarrhini</taxon>
        <taxon>Hominidae</taxon>
        <taxon>Homo</taxon>
    </lineage>
</organism>
<sequence>MTKKRRNNSHAKKGRGHVQPIRCTNCVRCVPTDKAIKKFVIRNIVEAAAVRDISEVSVFDAYVLPKLYVKLHYCVSCAIHSKVVRNRSREACKDRTPPPRFRPAGAAPRPPPKPM</sequence>
<protein>
    <recommendedName>
        <fullName evidence="2">Putative ribosomal protein eS26-like</fullName>
    </recommendedName>
    <alternativeName>
        <fullName>Putative 40S ribosomal protein S26-like 1</fullName>
    </alternativeName>
</protein>
<reference key="1">
    <citation type="journal article" date="2005" name="Nature">
        <title>The DNA sequence of the human X chromosome.</title>
        <authorList>
            <person name="Ross M.T."/>
            <person name="Grafham D.V."/>
            <person name="Coffey A.J."/>
            <person name="Scherer S."/>
            <person name="McLay K."/>
            <person name="Muzny D."/>
            <person name="Platzer M."/>
            <person name="Howell G.R."/>
            <person name="Burrows C."/>
            <person name="Bird C.P."/>
            <person name="Frankish A."/>
            <person name="Lovell F.L."/>
            <person name="Howe K.L."/>
            <person name="Ashurst J.L."/>
            <person name="Fulton R.S."/>
            <person name="Sudbrak R."/>
            <person name="Wen G."/>
            <person name="Jones M.C."/>
            <person name="Hurles M.E."/>
            <person name="Andrews T.D."/>
            <person name="Scott C.E."/>
            <person name="Searle S."/>
            <person name="Ramser J."/>
            <person name="Whittaker A."/>
            <person name="Deadman R."/>
            <person name="Carter N.P."/>
            <person name="Hunt S.E."/>
            <person name="Chen R."/>
            <person name="Cree A."/>
            <person name="Gunaratne P."/>
            <person name="Havlak P."/>
            <person name="Hodgson A."/>
            <person name="Metzker M.L."/>
            <person name="Richards S."/>
            <person name="Scott G."/>
            <person name="Steffen D."/>
            <person name="Sodergren E."/>
            <person name="Wheeler D.A."/>
            <person name="Worley K.C."/>
            <person name="Ainscough R."/>
            <person name="Ambrose K.D."/>
            <person name="Ansari-Lari M.A."/>
            <person name="Aradhya S."/>
            <person name="Ashwell R.I."/>
            <person name="Babbage A.K."/>
            <person name="Bagguley C.L."/>
            <person name="Ballabio A."/>
            <person name="Banerjee R."/>
            <person name="Barker G.E."/>
            <person name="Barlow K.F."/>
            <person name="Barrett I.P."/>
            <person name="Bates K.N."/>
            <person name="Beare D.M."/>
            <person name="Beasley H."/>
            <person name="Beasley O."/>
            <person name="Beck A."/>
            <person name="Bethel G."/>
            <person name="Blechschmidt K."/>
            <person name="Brady N."/>
            <person name="Bray-Allen S."/>
            <person name="Bridgeman A.M."/>
            <person name="Brown A.J."/>
            <person name="Brown M.J."/>
            <person name="Bonnin D."/>
            <person name="Bruford E.A."/>
            <person name="Buhay C."/>
            <person name="Burch P."/>
            <person name="Burford D."/>
            <person name="Burgess J."/>
            <person name="Burrill W."/>
            <person name="Burton J."/>
            <person name="Bye J.M."/>
            <person name="Carder C."/>
            <person name="Carrel L."/>
            <person name="Chako J."/>
            <person name="Chapman J.C."/>
            <person name="Chavez D."/>
            <person name="Chen E."/>
            <person name="Chen G."/>
            <person name="Chen Y."/>
            <person name="Chen Z."/>
            <person name="Chinault C."/>
            <person name="Ciccodicola A."/>
            <person name="Clark S.Y."/>
            <person name="Clarke G."/>
            <person name="Clee C.M."/>
            <person name="Clegg S."/>
            <person name="Clerc-Blankenburg K."/>
            <person name="Clifford K."/>
            <person name="Cobley V."/>
            <person name="Cole C.G."/>
            <person name="Conquer J.S."/>
            <person name="Corby N."/>
            <person name="Connor R.E."/>
            <person name="David R."/>
            <person name="Davies J."/>
            <person name="Davis C."/>
            <person name="Davis J."/>
            <person name="Delgado O."/>
            <person name="Deshazo D."/>
            <person name="Dhami P."/>
            <person name="Ding Y."/>
            <person name="Dinh H."/>
            <person name="Dodsworth S."/>
            <person name="Draper H."/>
            <person name="Dugan-Rocha S."/>
            <person name="Dunham A."/>
            <person name="Dunn M."/>
            <person name="Durbin K.J."/>
            <person name="Dutta I."/>
            <person name="Eades T."/>
            <person name="Ellwood M."/>
            <person name="Emery-Cohen A."/>
            <person name="Errington H."/>
            <person name="Evans K.L."/>
            <person name="Faulkner L."/>
            <person name="Francis F."/>
            <person name="Frankland J."/>
            <person name="Fraser A.E."/>
            <person name="Galgoczy P."/>
            <person name="Gilbert J."/>
            <person name="Gill R."/>
            <person name="Gloeckner G."/>
            <person name="Gregory S.G."/>
            <person name="Gribble S."/>
            <person name="Griffiths C."/>
            <person name="Grocock R."/>
            <person name="Gu Y."/>
            <person name="Gwilliam R."/>
            <person name="Hamilton C."/>
            <person name="Hart E.A."/>
            <person name="Hawes A."/>
            <person name="Heath P.D."/>
            <person name="Heitmann K."/>
            <person name="Hennig S."/>
            <person name="Hernandez J."/>
            <person name="Hinzmann B."/>
            <person name="Ho S."/>
            <person name="Hoffs M."/>
            <person name="Howden P.J."/>
            <person name="Huckle E.J."/>
            <person name="Hume J."/>
            <person name="Hunt P.J."/>
            <person name="Hunt A.R."/>
            <person name="Isherwood J."/>
            <person name="Jacob L."/>
            <person name="Johnson D."/>
            <person name="Jones S."/>
            <person name="de Jong P.J."/>
            <person name="Joseph S.S."/>
            <person name="Keenan S."/>
            <person name="Kelly S."/>
            <person name="Kershaw J.K."/>
            <person name="Khan Z."/>
            <person name="Kioschis P."/>
            <person name="Klages S."/>
            <person name="Knights A.J."/>
            <person name="Kosiura A."/>
            <person name="Kovar-Smith C."/>
            <person name="Laird G.K."/>
            <person name="Langford C."/>
            <person name="Lawlor S."/>
            <person name="Leversha M."/>
            <person name="Lewis L."/>
            <person name="Liu W."/>
            <person name="Lloyd C."/>
            <person name="Lloyd D.M."/>
            <person name="Loulseged H."/>
            <person name="Loveland J.E."/>
            <person name="Lovell J.D."/>
            <person name="Lozado R."/>
            <person name="Lu J."/>
            <person name="Lyne R."/>
            <person name="Ma J."/>
            <person name="Maheshwari M."/>
            <person name="Matthews L.H."/>
            <person name="McDowall J."/>
            <person name="McLaren S."/>
            <person name="McMurray A."/>
            <person name="Meidl P."/>
            <person name="Meitinger T."/>
            <person name="Milne S."/>
            <person name="Miner G."/>
            <person name="Mistry S.L."/>
            <person name="Morgan M."/>
            <person name="Morris S."/>
            <person name="Mueller I."/>
            <person name="Mullikin J.C."/>
            <person name="Nguyen N."/>
            <person name="Nordsiek G."/>
            <person name="Nyakatura G."/>
            <person name="O'dell C.N."/>
            <person name="Okwuonu G."/>
            <person name="Palmer S."/>
            <person name="Pandian R."/>
            <person name="Parker D."/>
            <person name="Parrish J."/>
            <person name="Pasternak S."/>
            <person name="Patel D."/>
            <person name="Pearce A.V."/>
            <person name="Pearson D.M."/>
            <person name="Pelan S.E."/>
            <person name="Perez L."/>
            <person name="Porter K.M."/>
            <person name="Ramsey Y."/>
            <person name="Reichwald K."/>
            <person name="Rhodes S."/>
            <person name="Ridler K.A."/>
            <person name="Schlessinger D."/>
            <person name="Schueler M.G."/>
            <person name="Sehra H.K."/>
            <person name="Shaw-Smith C."/>
            <person name="Shen H."/>
            <person name="Sheridan E.M."/>
            <person name="Shownkeen R."/>
            <person name="Skuce C.D."/>
            <person name="Smith M.L."/>
            <person name="Sotheran E.C."/>
            <person name="Steingruber H.E."/>
            <person name="Steward C.A."/>
            <person name="Storey R."/>
            <person name="Swann R.M."/>
            <person name="Swarbreck D."/>
            <person name="Tabor P.E."/>
            <person name="Taudien S."/>
            <person name="Taylor T."/>
            <person name="Teague B."/>
            <person name="Thomas K."/>
            <person name="Thorpe A."/>
            <person name="Timms K."/>
            <person name="Tracey A."/>
            <person name="Trevanion S."/>
            <person name="Tromans A.C."/>
            <person name="d'Urso M."/>
            <person name="Verduzco D."/>
            <person name="Villasana D."/>
            <person name="Waldron L."/>
            <person name="Wall M."/>
            <person name="Wang Q."/>
            <person name="Warren J."/>
            <person name="Warry G.L."/>
            <person name="Wei X."/>
            <person name="West A."/>
            <person name="Whitehead S.L."/>
            <person name="Whiteley M.N."/>
            <person name="Wilkinson J.E."/>
            <person name="Willey D.L."/>
            <person name="Williams G."/>
            <person name="Williams L."/>
            <person name="Williamson A."/>
            <person name="Williamson H."/>
            <person name="Wilming L."/>
            <person name="Woodmansey R.L."/>
            <person name="Wray P.W."/>
            <person name="Yen J."/>
            <person name="Zhang J."/>
            <person name="Zhou J."/>
            <person name="Zoghbi H."/>
            <person name="Zorilla S."/>
            <person name="Buck D."/>
            <person name="Reinhardt R."/>
            <person name="Poustka A."/>
            <person name="Rosenthal A."/>
            <person name="Lehrach H."/>
            <person name="Meindl A."/>
            <person name="Minx P.J."/>
            <person name="Hillier L.W."/>
            <person name="Willard H.F."/>
            <person name="Wilson R.K."/>
            <person name="Waterston R.H."/>
            <person name="Rice C.M."/>
            <person name="Vaudin M."/>
            <person name="Coulson A."/>
            <person name="Nelson D.L."/>
            <person name="Weinstock G."/>
            <person name="Sulston J.E."/>
            <person name="Durbin R.M."/>
            <person name="Hubbard T."/>
            <person name="Gibbs R.A."/>
            <person name="Beck S."/>
            <person name="Rogers J."/>
            <person name="Bentley D.R."/>
        </authorList>
    </citation>
    <scope>NUCLEOTIDE SEQUENCE [LARGE SCALE GENOMIC DNA]</scope>
</reference>
<accession>Q5JNZ5</accession>
<dbReference type="EMBL" id="AL929401">
    <property type="status" value="NOT_ANNOTATED_CDS"/>
    <property type="molecule type" value="Genomic_DNA"/>
</dbReference>
<dbReference type="SMR" id="Q5JNZ5"/>
<dbReference type="FunCoup" id="Q5JNZ5">
    <property type="interactions" value="412"/>
</dbReference>
<dbReference type="IntAct" id="Q5JNZ5">
    <property type="interactions" value="16"/>
</dbReference>
<dbReference type="MINT" id="Q5JNZ5"/>
<dbReference type="MetOSite" id="Q5JNZ5"/>
<dbReference type="SwissPalm" id="Q5JNZ5"/>
<dbReference type="BioMuta" id="HGNC:31817"/>
<dbReference type="DMDM" id="74741611"/>
<dbReference type="jPOST" id="Q5JNZ5"/>
<dbReference type="MassIVE" id="Q5JNZ5"/>
<dbReference type="ProteomicsDB" id="62994"/>
<dbReference type="Pumba" id="Q5JNZ5"/>
<dbReference type="AGR" id="HGNC:31817"/>
<dbReference type="GeneCards" id="RPS26P11"/>
<dbReference type="HGNC" id="HGNC:31817">
    <property type="gene designation" value="RPS26P11"/>
</dbReference>
<dbReference type="neXtProt" id="NX_Q5JNZ5"/>
<dbReference type="InParanoid" id="Q5JNZ5"/>
<dbReference type="PAN-GO" id="Q5JNZ5">
    <property type="GO annotations" value="3 GO annotations based on evolutionary models"/>
</dbReference>
<dbReference type="PhylomeDB" id="Q5JNZ5"/>
<dbReference type="PathwayCommons" id="Q5JNZ5"/>
<dbReference type="SignaLink" id="Q5JNZ5"/>
<dbReference type="CD-CODE" id="232F8A39">
    <property type="entry name" value="P-body"/>
</dbReference>
<dbReference type="Pharos" id="Q5JNZ5">
    <property type="development level" value="Tdark"/>
</dbReference>
<dbReference type="Proteomes" id="UP000005640">
    <property type="component" value="Unplaced"/>
</dbReference>
<dbReference type="RNAct" id="Q5JNZ5">
    <property type="molecule type" value="protein"/>
</dbReference>
<dbReference type="GO" id="GO:0022627">
    <property type="term" value="C:cytosolic small ribosomal subunit"/>
    <property type="evidence" value="ECO:0000318"/>
    <property type="project" value="GO_Central"/>
</dbReference>
<dbReference type="GO" id="GO:0003729">
    <property type="term" value="F:mRNA binding"/>
    <property type="evidence" value="ECO:0000318"/>
    <property type="project" value="GO_Central"/>
</dbReference>
<dbReference type="GO" id="GO:0003735">
    <property type="term" value="F:structural constituent of ribosome"/>
    <property type="evidence" value="ECO:0000318"/>
    <property type="project" value="GO_Central"/>
</dbReference>
<dbReference type="GO" id="GO:0006412">
    <property type="term" value="P:translation"/>
    <property type="evidence" value="ECO:0007669"/>
    <property type="project" value="InterPro"/>
</dbReference>
<dbReference type="FunFam" id="3.30.1740.20:FF:000001">
    <property type="entry name" value="40S ribosomal protein S26"/>
    <property type="match status" value="1"/>
</dbReference>
<dbReference type="Gene3D" id="3.30.1740.20">
    <property type="entry name" value="Ribosomal protein S26e"/>
    <property type="match status" value="1"/>
</dbReference>
<dbReference type="InterPro" id="IPR000892">
    <property type="entry name" value="Ribosomal_eS26"/>
</dbReference>
<dbReference type="InterPro" id="IPR047864">
    <property type="entry name" value="Ribosomal_eS26_CS"/>
</dbReference>
<dbReference type="InterPro" id="IPR038551">
    <property type="entry name" value="Ribosomal_eS26_sf"/>
</dbReference>
<dbReference type="PANTHER" id="PTHR12538">
    <property type="entry name" value="40S RIBOSOMAL PROTEIN S26"/>
    <property type="match status" value="1"/>
</dbReference>
<dbReference type="PANTHER" id="PTHR12538:SF7">
    <property type="entry name" value="SMALL RIBOSOMAL SUBUNIT PROTEIN ES26-RELATED"/>
    <property type="match status" value="1"/>
</dbReference>
<dbReference type="Pfam" id="PF01283">
    <property type="entry name" value="Ribosomal_S26e"/>
    <property type="match status" value="1"/>
</dbReference>
<dbReference type="PROSITE" id="PS00733">
    <property type="entry name" value="RIBOSOMAL_S26E"/>
    <property type="match status" value="1"/>
</dbReference>
<name>RS26L_HUMAN</name>
<proteinExistence type="uncertain"/>
<feature type="chain" id="PRO_0000269847" description="Putative ribosomal protein eS26-like">
    <location>
        <begin position="1"/>
        <end position="115"/>
    </location>
</feature>
<feature type="region of interest" description="Disordered" evidence="1">
    <location>
        <begin position="86"/>
        <end position="115"/>
    </location>
</feature>
<feature type="compositionally biased region" description="Basic and acidic residues" evidence="1">
    <location>
        <begin position="87"/>
        <end position="97"/>
    </location>
</feature>
<gene>
    <name type="primary">RPS26P11</name>
    <name type="synonym">RPS26L1</name>
</gene>
<keyword id="KW-1185">Reference proteome</keyword>
<keyword id="KW-0687">Ribonucleoprotein</keyword>
<keyword id="KW-0689">Ribosomal protein</keyword>
<evidence type="ECO:0000256" key="1">
    <source>
        <dbReference type="SAM" id="MobiDB-lite"/>
    </source>
</evidence>
<evidence type="ECO:0000305" key="2"/>